<sequence>MPQPLILASTSEIRAKMLSNAGVPHTTSGARIDEEMVKEALLAEQASPRDIADTLAEMKARKISDKTPGAIVLGCDQVLDHRGVLLSKPVDSHDALTQLQALRNDRHTLLSAAVICEDGKPVWRHVGVVRLRMHDVSDAYLQDYVARNWDSIRHAVGAYKLEEEGVRLFSRIDGDYFTVLGLPLLELLSYLALRGDLPR</sequence>
<protein>
    <recommendedName>
        <fullName evidence="1">Nucleoside triphosphate pyrophosphatase</fullName>
        <ecNumber evidence="1">3.6.1.9</ecNumber>
    </recommendedName>
    <alternativeName>
        <fullName evidence="1">Nucleotide pyrophosphatase</fullName>
        <shortName evidence="1">Nucleotide PPase</shortName>
    </alternativeName>
</protein>
<feature type="chain" id="PRO_0000267413" description="Nucleoside triphosphate pyrophosphatase">
    <location>
        <begin position="1"/>
        <end position="199"/>
    </location>
</feature>
<feature type="active site" description="Proton acceptor" evidence="1">
    <location>
        <position position="76"/>
    </location>
</feature>
<evidence type="ECO:0000255" key="1">
    <source>
        <dbReference type="HAMAP-Rule" id="MF_00528"/>
    </source>
</evidence>
<comment type="function">
    <text evidence="1">Nucleoside triphosphate pyrophosphatase. May have a dual role in cell division arrest and in preventing the incorporation of modified nucleotides into cellular nucleic acids.</text>
</comment>
<comment type="catalytic activity">
    <reaction evidence="1">
        <text>a ribonucleoside 5'-triphosphate + H2O = a ribonucleoside 5'-phosphate + diphosphate + H(+)</text>
        <dbReference type="Rhea" id="RHEA:23996"/>
        <dbReference type="ChEBI" id="CHEBI:15377"/>
        <dbReference type="ChEBI" id="CHEBI:15378"/>
        <dbReference type="ChEBI" id="CHEBI:33019"/>
        <dbReference type="ChEBI" id="CHEBI:58043"/>
        <dbReference type="ChEBI" id="CHEBI:61557"/>
        <dbReference type="EC" id="3.6.1.9"/>
    </reaction>
</comment>
<comment type="catalytic activity">
    <reaction evidence="1">
        <text>a 2'-deoxyribonucleoside 5'-triphosphate + H2O = a 2'-deoxyribonucleoside 5'-phosphate + diphosphate + H(+)</text>
        <dbReference type="Rhea" id="RHEA:44644"/>
        <dbReference type="ChEBI" id="CHEBI:15377"/>
        <dbReference type="ChEBI" id="CHEBI:15378"/>
        <dbReference type="ChEBI" id="CHEBI:33019"/>
        <dbReference type="ChEBI" id="CHEBI:61560"/>
        <dbReference type="ChEBI" id="CHEBI:65317"/>
        <dbReference type="EC" id="3.6.1.9"/>
    </reaction>
</comment>
<comment type="cofactor">
    <cofactor evidence="1">
        <name>a divalent metal cation</name>
        <dbReference type="ChEBI" id="CHEBI:60240"/>
    </cofactor>
</comment>
<comment type="subcellular location">
    <subcellularLocation>
        <location evidence="1">Cytoplasm</location>
    </subcellularLocation>
</comment>
<comment type="similarity">
    <text evidence="1">Belongs to the Maf family.</text>
</comment>
<keyword id="KW-0963">Cytoplasm</keyword>
<keyword id="KW-0378">Hydrolase</keyword>
<keyword id="KW-0546">Nucleotide metabolism</keyword>
<keyword id="KW-1185">Reference proteome</keyword>
<dbReference type="EC" id="3.6.1.9" evidence="1"/>
<dbReference type="EMBL" id="CP000362">
    <property type="protein sequence ID" value="ABG30152.1"/>
    <property type="molecule type" value="Genomic_DNA"/>
</dbReference>
<dbReference type="RefSeq" id="WP_011566774.1">
    <property type="nucleotide sequence ID" value="NC_008209.1"/>
</dbReference>
<dbReference type="SMR" id="Q16CZ1"/>
<dbReference type="STRING" id="375451.RD1_0437"/>
<dbReference type="KEGG" id="rde:RD1_0437"/>
<dbReference type="eggNOG" id="COG0424">
    <property type="taxonomic scope" value="Bacteria"/>
</dbReference>
<dbReference type="HOGENOM" id="CLU_040416_1_1_5"/>
<dbReference type="OrthoDB" id="9813962at2"/>
<dbReference type="Proteomes" id="UP000007029">
    <property type="component" value="Chromosome"/>
</dbReference>
<dbReference type="GO" id="GO:0005737">
    <property type="term" value="C:cytoplasm"/>
    <property type="evidence" value="ECO:0007669"/>
    <property type="project" value="UniProtKB-SubCell"/>
</dbReference>
<dbReference type="GO" id="GO:0047429">
    <property type="term" value="F:nucleoside triphosphate diphosphatase activity"/>
    <property type="evidence" value="ECO:0007669"/>
    <property type="project" value="UniProtKB-EC"/>
</dbReference>
<dbReference type="GO" id="GO:0009117">
    <property type="term" value="P:nucleotide metabolic process"/>
    <property type="evidence" value="ECO:0007669"/>
    <property type="project" value="UniProtKB-KW"/>
</dbReference>
<dbReference type="Gene3D" id="3.90.950.10">
    <property type="match status" value="1"/>
</dbReference>
<dbReference type="HAMAP" id="MF_00528">
    <property type="entry name" value="Maf"/>
    <property type="match status" value="1"/>
</dbReference>
<dbReference type="InterPro" id="IPR029001">
    <property type="entry name" value="ITPase-like_fam"/>
</dbReference>
<dbReference type="InterPro" id="IPR003697">
    <property type="entry name" value="Maf-like"/>
</dbReference>
<dbReference type="PANTHER" id="PTHR43213">
    <property type="entry name" value="BIFUNCTIONAL DTTP/UTP PYROPHOSPHATASE/METHYLTRANSFERASE PROTEIN-RELATED"/>
    <property type="match status" value="1"/>
</dbReference>
<dbReference type="PANTHER" id="PTHR43213:SF5">
    <property type="entry name" value="BIFUNCTIONAL DTTP_UTP PYROPHOSPHATASE_METHYLTRANSFERASE PROTEIN-RELATED"/>
    <property type="match status" value="1"/>
</dbReference>
<dbReference type="Pfam" id="PF02545">
    <property type="entry name" value="Maf"/>
    <property type="match status" value="1"/>
</dbReference>
<dbReference type="PIRSF" id="PIRSF006305">
    <property type="entry name" value="Maf"/>
    <property type="match status" value="1"/>
</dbReference>
<dbReference type="SUPFAM" id="SSF52972">
    <property type="entry name" value="ITPase-like"/>
    <property type="match status" value="1"/>
</dbReference>
<organism>
    <name type="scientific">Roseobacter denitrificans (strain ATCC 33942 / OCh 114)</name>
    <name type="common">Erythrobacter sp. (strain OCh 114)</name>
    <name type="synonym">Roseobacter denitrificans</name>
    <dbReference type="NCBI Taxonomy" id="375451"/>
    <lineage>
        <taxon>Bacteria</taxon>
        <taxon>Pseudomonadati</taxon>
        <taxon>Pseudomonadota</taxon>
        <taxon>Alphaproteobacteria</taxon>
        <taxon>Rhodobacterales</taxon>
        <taxon>Roseobacteraceae</taxon>
        <taxon>Roseobacter</taxon>
    </lineage>
</organism>
<proteinExistence type="inferred from homology"/>
<gene>
    <name type="ordered locus">RD1_0437</name>
</gene>
<reference key="1">
    <citation type="journal article" date="2007" name="J. Bacteriol.">
        <title>The complete genome sequence of Roseobacter denitrificans reveals a mixotrophic rather than photosynthetic metabolism.</title>
        <authorList>
            <person name="Swingley W.D."/>
            <person name="Sadekar S."/>
            <person name="Mastrian S.D."/>
            <person name="Matthies H.J."/>
            <person name="Hao J."/>
            <person name="Ramos H."/>
            <person name="Acharya C.R."/>
            <person name="Conrad A.L."/>
            <person name="Taylor H.L."/>
            <person name="Dejesa L.C."/>
            <person name="Shah M.K."/>
            <person name="O'Huallachain M.E."/>
            <person name="Lince M.T."/>
            <person name="Blankenship R.E."/>
            <person name="Beatty J.T."/>
            <person name="Touchman J.W."/>
        </authorList>
    </citation>
    <scope>NUCLEOTIDE SEQUENCE [LARGE SCALE GENOMIC DNA]</scope>
    <source>
        <strain>ATCC 33942 / OCh 114</strain>
    </source>
</reference>
<name>NTPP_ROSDO</name>
<accession>Q16CZ1</accession>